<accession>P57185</accession>
<proteinExistence type="inferred from homology"/>
<sequence>MTSEYVMELFYNAMKVALIIASPLLLAALISGLIISILQAATQVNEQTLSFIPKIISVLGVISILGPWMLGVMLDYMHNLFNNIILIIK</sequence>
<organism>
    <name type="scientific">Buchnera aphidicola subsp. Acyrthosiphon pisum (strain APS)</name>
    <name type="common">Acyrthosiphon pisum symbiotic bacterium</name>
    <dbReference type="NCBI Taxonomy" id="107806"/>
    <lineage>
        <taxon>Bacteria</taxon>
        <taxon>Pseudomonadati</taxon>
        <taxon>Pseudomonadota</taxon>
        <taxon>Gammaproteobacteria</taxon>
        <taxon>Enterobacterales</taxon>
        <taxon>Erwiniaceae</taxon>
        <taxon>Buchnera</taxon>
    </lineage>
</organism>
<name>FLIQ_BUCAI</name>
<evidence type="ECO:0000250" key="1"/>
<evidence type="ECO:0000255" key="2"/>
<evidence type="ECO:0000305" key="3"/>
<keyword id="KW-0975">Bacterial flagellum</keyword>
<keyword id="KW-1003">Cell membrane</keyword>
<keyword id="KW-0472">Membrane</keyword>
<keyword id="KW-1185">Reference proteome</keyword>
<keyword id="KW-0812">Transmembrane</keyword>
<keyword id="KW-1133">Transmembrane helix</keyword>
<feature type="chain" id="PRO_0000129089" description="Flagellar biosynthetic protein FliQ">
    <location>
        <begin position="1"/>
        <end position="89"/>
    </location>
</feature>
<feature type="transmembrane region" description="Helical" evidence="2">
    <location>
        <begin position="18"/>
        <end position="38"/>
    </location>
</feature>
<feature type="transmembrane region" description="Helical" evidence="2">
    <location>
        <begin position="55"/>
        <end position="75"/>
    </location>
</feature>
<gene>
    <name type="primary">fliQ</name>
    <name type="ordered locus">BU083</name>
</gene>
<protein>
    <recommendedName>
        <fullName>Flagellar biosynthetic protein FliQ</fullName>
    </recommendedName>
</protein>
<reference key="1">
    <citation type="journal article" date="2000" name="Nature">
        <title>Genome sequence of the endocellular bacterial symbiont of aphids Buchnera sp. APS.</title>
        <authorList>
            <person name="Shigenobu S."/>
            <person name="Watanabe H."/>
            <person name="Hattori M."/>
            <person name="Sakaki Y."/>
            <person name="Ishikawa H."/>
        </authorList>
    </citation>
    <scope>NUCLEOTIDE SEQUENCE [LARGE SCALE GENOMIC DNA]</scope>
    <source>
        <strain>APS</strain>
    </source>
</reference>
<comment type="function">
    <text evidence="1">Role in flagellar biosynthesis.</text>
</comment>
<comment type="subcellular location">
    <subcellularLocation>
        <location evidence="3">Cell membrane</location>
        <topology evidence="3">Multi-pass membrane protein</topology>
    </subcellularLocation>
    <subcellularLocation>
        <location evidence="1">Bacterial flagellum basal body</location>
    </subcellularLocation>
</comment>
<comment type="similarity">
    <text evidence="3">Belongs to the FliQ/MopD/SpaQ family.</text>
</comment>
<dbReference type="EMBL" id="BA000003">
    <property type="protein sequence ID" value="BAB12803.1"/>
    <property type="molecule type" value="Genomic_DNA"/>
</dbReference>
<dbReference type="RefSeq" id="NP_239917.1">
    <property type="nucleotide sequence ID" value="NC_002528.1"/>
</dbReference>
<dbReference type="RefSeq" id="WP_009874036.1">
    <property type="nucleotide sequence ID" value="NC_002528.1"/>
</dbReference>
<dbReference type="SMR" id="P57185"/>
<dbReference type="STRING" id="563178.BUAP5A_082"/>
<dbReference type="EnsemblBacteria" id="BAB12803">
    <property type="protein sequence ID" value="BAB12803"/>
    <property type="gene ID" value="BAB12803"/>
</dbReference>
<dbReference type="KEGG" id="buc:BU083"/>
<dbReference type="PATRIC" id="fig|107806.10.peg.89"/>
<dbReference type="eggNOG" id="COG1987">
    <property type="taxonomic scope" value="Bacteria"/>
</dbReference>
<dbReference type="HOGENOM" id="CLU_164516_2_0_6"/>
<dbReference type="Proteomes" id="UP000001806">
    <property type="component" value="Chromosome"/>
</dbReference>
<dbReference type="GO" id="GO:0009425">
    <property type="term" value="C:bacterial-type flagellum basal body"/>
    <property type="evidence" value="ECO:0007669"/>
    <property type="project" value="UniProtKB-SubCell"/>
</dbReference>
<dbReference type="GO" id="GO:0005886">
    <property type="term" value="C:plasma membrane"/>
    <property type="evidence" value="ECO:0007669"/>
    <property type="project" value="UniProtKB-SubCell"/>
</dbReference>
<dbReference type="GO" id="GO:0044780">
    <property type="term" value="P:bacterial-type flagellum assembly"/>
    <property type="evidence" value="ECO:0007669"/>
    <property type="project" value="InterPro"/>
</dbReference>
<dbReference type="GO" id="GO:0009306">
    <property type="term" value="P:protein secretion"/>
    <property type="evidence" value="ECO:0007669"/>
    <property type="project" value="InterPro"/>
</dbReference>
<dbReference type="InterPro" id="IPR002191">
    <property type="entry name" value="Bac_export_3"/>
</dbReference>
<dbReference type="InterPro" id="IPR006305">
    <property type="entry name" value="FliQ"/>
</dbReference>
<dbReference type="NCBIfam" id="TIGR01402">
    <property type="entry name" value="fliQ"/>
    <property type="match status" value="1"/>
</dbReference>
<dbReference type="PANTHER" id="PTHR34040">
    <property type="entry name" value="FLAGELLAR BIOSYNTHETIC PROTEIN FLIQ"/>
    <property type="match status" value="1"/>
</dbReference>
<dbReference type="PANTHER" id="PTHR34040:SF2">
    <property type="entry name" value="FLAGELLAR BIOSYNTHETIC PROTEIN FLIQ"/>
    <property type="match status" value="1"/>
</dbReference>
<dbReference type="Pfam" id="PF01313">
    <property type="entry name" value="Bac_export_3"/>
    <property type="match status" value="1"/>
</dbReference>
<dbReference type="PIRSF" id="PIRSF004669">
    <property type="entry name" value="FliQ"/>
    <property type="match status" value="1"/>
</dbReference>
<dbReference type="PRINTS" id="PR00952">
    <property type="entry name" value="TYPE3IMQPROT"/>
</dbReference>